<dbReference type="PDB" id="1FHJ">
    <property type="method" value="X-ray"/>
    <property type="resolution" value="1.80 A"/>
    <property type="chains" value="A/C=1-141"/>
</dbReference>
<dbReference type="PDB" id="2B7H">
    <property type="method" value="X-ray"/>
    <property type="resolution" value="2.20 A"/>
    <property type="chains" value="A/C=1-141"/>
</dbReference>
<dbReference type="PDBsum" id="1FHJ"/>
<dbReference type="PDBsum" id="2B7H"/>
<dbReference type="SMR" id="P60523"/>
<dbReference type="EvolutionaryTrace" id="P60523"/>
<dbReference type="GO" id="GO:0072562">
    <property type="term" value="C:blood microparticle"/>
    <property type="evidence" value="ECO:0007669"/>
    <property type="project" value="TreeGrafter"/>
</dbReference>
<dbReference type="GO" id="GO:0031838">
    <property type="term" value="C:haptoglobin-hemoglobin complex"/>
    <property type="evidence" value="ECO:0007669"/>
    <property type="project" value="TreeGrafter"/>
</dbReference>
<dbReference type="GO" id="GO:0005833">
    <property type="term" value="C:hemoglobin complex"/>
    <property type="evidence" value="ECO:0007669"/>
    <property type="project" value="InterPro"/>
</dbReference>
<dbReference type="GO" id="GO:0031720">
    <property type="term" value="F:haptoglobin binding"/>
    <property type="evidence" value="ECO:0007669"/>
    <property type="project" value="TreeGrafter"/>
</dbReference>
<dbReference type="GO" id="GO:0020037">
    <property type="term" value="F:heme binding"/>
    <property type="evidence" value="ECO:0007669"/>
    <property type="project" value="InterPro"/>
</dbReference>
<dbReference type="GO" id="GO:0005506">
    <property type="term" value="F:iron ion binding"/>
    <property type="evidence" value="ECO:0007669"/>
    <property type="project" value="InterPro"/>
</dbReference>
<dbReference type="GO" id="GO:0043177">
    <property type="term" value="F:organic acid binding"/>
    <property type="evidence" value="ECO:0007669"/>
    <property type="project" value="TreeGrafter"/>
</dbReference>
<dbReference type="GO" id="GO:0019825">
    <property type="term" value="F:oxygen binding"/>
    <property type="evidence" value="ECO:0007669"/>
    <property type="project" value="InterPro"/>
</dbReference>
<dbReference type="GO" id="GO:0005344">
    <property type="term" value="F:oxygen carrier activity"/>
    <property type="evidence" value="ECO:0007669"/>
    <property type="project" value="UniProtKB-KW"/>
</dbReference>
<dbReference type="GO" id="GO:0004601">
    <property type="term" value="F:peroxidase activity"/>
    <property type="evidence" value="ECO:0007669"/>
    <property type="project" value="TreeGrafter"/>
</dbReference>
<dbReference type="GO" id="GO:0042744">
    <property type="term" value="P:hydrogen peroxide catabolic process"/>
    <property type="evidence" value="ECO:0007669"/>
    <property type="project" value="TreeGrafter"/>
</dbReference>
<dbReference type="CDD" id="cd08927">
    <property type="entry name" value="Hb-alpha-like"/>
    <property type="match status" value="1"/>
</dbReference>
<dbReference type="FunFam" id="1.10.490.10:FF:000002">
    <property type="entry name" value="Hemoglobin subunit alpha"/>
    <property type="match status" value="1"/>
</dbReference>
<dbReference type="Gene3D" id="1.10.490.10">
    <property type="entry name" value="Globins"/>
    <property type="match status" value="1"/>
</dbReference>
<dbReference type="InterPro" id="IPR000971">
    <property type="entry name" value="Globin"/>
</dbReference>
<dbReference type="InterPro" id="IPR009050">
    <property type="entry name" value="Globin-like_sf"/>
</dbReference>
<dbReference type="InterPro" id="IPR012292">
    <property type="entry name" value="Globin/Proto"/>
</dbReference>
<dbReference type="InterPro" id="IPR002338">
    <property type="entry name" value="Hemoglobin_a-typ"/>
</dbReference>
<dbReference type="InterPro" id="IPR050056">
    <property type="entry name" value="Hemoglobin_oxygen_transport"/>
</dbReference>
<dbReference type="InterPro" id="IPR002339">
    <property type="entry name" value="Hemoglobin_pi"/>
</dbReference>
<dbReference type="PANTHER" id="PTHR11442">
    <property type="entry name" value="HEMOGLOBIN FAMILY MEMBER"/>
    <property type="match status" value="1"/>
</dbReference>
<dbReference type="PANTHER" id="PTHR11442:SF48">
    <property type="entry name" value="HEMOGLOBIN SUBUNIT ALPHA"/>
    <property type="match status" value="1"/>
</dbReference>
<dbReference type="Pfam" id="PF00042">
    <property type="entry name" value="Globin"/>
    <property type="match status" value="1"/>
</dbReference>
<dbReference type="PRINTS" id="PR00612">
    <property type="entry name" value="ALPHAHAEM"/>
</dbReference>
<dbReference type="PRINTS" id="PR00815">
    <property type="entry name" value="PIHAEM"/>
</dbReference>
<dbReference type="SUPFAM" id="SSF46458">
    <property type="entry name" value="Globin-like"/>
    <property type="match status" value="1"/>
</dbReference>
<dbReference type="PROSITE" id="PS01033">
    <property type="entry name" value="GLOBIN"/>
    <property type="match status" value="1"/>
</dbReference>
<proteinExistence type="evidence at protein level"/>
<name>HBA_CHRBR</name>
<keyword id="KW-0002">3D-structure</keyword>
<keyword id="KW-0007">Acetylation</keyword>
<keyword id="KW-0349">Heme</keyword>
<keyword id="KW-0408">Iron</keyword>
<keyword id="KW-0479">Metal-binding</keyword>
<keyword id="KW-0561">Oxygen transport</keyword>
<keyword id="KW-0597">Phosphoprotein</keyword>
<keyword id="KW-0813">Transport</keyword>
<comment type="function">
    <text>Involved in oxygen transport from the lung to the various peripheral tissues.</text>
</comment>
<comment type="function">
    <molecule>Hemopressin</molecule>
    <text evidence="2">Hemopressin acts as an antagonist peptide of the cannabinoid receptor CNR1. Hemopressin-binding efficiently blocks cannabinoid receptor CNR1 and subsequent signaling.</text>
</comment>
<comment type="subunit">
    <text>Heterotetramer of two alpha chains and two beta chains.</text>
</comment>
<comment type="tissue specificity">
    <text>Red blood cells.</text>
</comment>
<comment type="miscellaneous">
    <text>The sequence shown is one of two non-allelic alpha chains from dog.</text>
</comment>
<comment type="similarity">
    <text evidence="4">Belongs to the globin family.</text>
</comment>
<feature type="chain" id="PRO_0000052601" description="Hemoglobin subunit alpha">
    <location>
        <begin position="1"/>
        <end position="141"/>
    </location>
</feature>
<feature type="peptide" id="PRO_0000455858" description="Hemopressin" evidence="2">
    <location>
        <begin position="95"/>
        <end position="103"/>
    </location>
</feature>
<feature type="domain" description="Globin" evidence="4">
    <location>
        <begin position="1"/>
        <end position="141"/>
    </location>
</feature>
<feature type="binding site" evidence="4">
    <location>
        <position position="58"/>
    </location>
    <ligand>
        <name>O2</name>
        <dbReference type="ChEBI" id="CHEBI:15379"/>
    </ligand>
</feature>
<feature type="binding site" description="proximal binding residue" evidence="4">
    <location>
        <position position="87"/>
    </location>
    <ligand>
        <name>heme b</name>
        <dbReference type="ChEBI" id="CHEBI:60344"/>
    </ligand>
    <ligandPart>
        <name>Fe</name>
        <dbReference type="ChEBI" id="CHEBI:18248"/>
    </ligandPart>
</feature>
<feature type="modified residue" description="Phosphoserine" evidence="3">
    <location>
        <position position="3"/>
    </location>
</feature>
<feature type="modified residue" description="N6-succinyllysine" evidence="1">
    <location>
        <position position="7"/>
    </location>
</feature>
<feature type="modified residue" description="Phosphothreonine" evidence="3">
    <location>
        <position position="8"/>
    </location>
</feature>
<feature type="modified residue" description="N6-succinyllysine" evidence="1">
    <location>
        <position position="11"/>
    </location>
</feature>
<feature type="modified residue" description="N6-acetyllysine; alternate" evidence="3">
    <location>
        <position position="16"/>
    </location>
</feature>
<feature type="modified residue" description="N6-succinyllysine; alternate" evidence="1">
    <location>
        <position position="16"/>
    </location>
</feature>
<feature type="modified residue" description="Phosphotyrosine" evidence="3">
    <location>
        <position position="24"/>
    </location>
</feature>
<feature type="modified residue" description="Phosphoserine" evidence="3">
    <location>
        <position position="35"/>
    </location>
</feature>
<feature type="modified residue" description="N6-succinyllysine" evidence="1">
    <location>
        <position position="40"/>
    </location>
</feature>
<feature type="modified residue" description="Phosphoserine" evidence="3">
    <location>
        <position position="49"/>
    </location>
</feature>
<feature type="modified residue" description="Phosphoserine" evidence="1">
    <location>
        <position position="102"/>
    </location>
</feature>
<feature type="modified residue" description="Phosphothreonine" evidence="1">
    <location>
        <position position="108"/>
    </location>
</feature>
<feature type="modified residue" description="Phosphoserine" evidence="1">
    <location>
        <position position="124"/>
    </location>
</feature>
<feature type="modified residue" description="Phosphothreonine" evidence="1">
    <location>
        <position position="134"/>
    </location>
</feature>
<feature type="modified residue" description="Phosphothreonine" evidence="1">
    <location>
        <position position="137"/>
    </location>
</feature>
<feature type="modified residue" description="Phosphoserine" evidence="1">
    <location>
        <position position="138"/>
    </location>
</feature>
<feature type="helix" evidence="5">
    <location>
        <begin position="4"/>
        <end position="17"/>
    </location>
</feature>
<feature type="helix" evidence="5">
    <location>
        <begin position="18"/>
        <end position="20"/>
    </location>
</feature>
<feature type="helix" evidence="5">
    <location>
        <begin position="21"/>
        <end position="35"/>
    </location>
</feature>
<feature type="helix" evidence="5">
    <location>
        <begin position="37"/>
        <end position="42"/>
    </location>
</feature>
<feature type="helix" evidence="5">
    <location>
        <begin position="53"/>
        <end position="71"/>
    </location>
</feature>
<feature type="turn" evidence="5">
    <location>
        <begin position="72"/>
        <end position="74"/>
    </location>
</feature>
<feature type="helix" evidence="5">
    <location>
        <begin position="76"/>
        <end position="89"/>
    </location>
</feature>
<feature type="helix" evidence="5">
    <location>
        <begin position="96"/>
        <end position="112"/>
    </location>
</feature>
<feature type="turn" evidence="5">
    <location>
        <begin position="114"/>
        <end position="116"/>
    </location>
</feature>
<feature type="helix" evidence="5">
    <location>
        <begin position="119"/>
        <end position="136"/>
    </location>
</feature>
<feature type="turn" evidence="5">
    <location>
        <begin position="137"/>
        <end position="139"/>
    </location>
</feature>
<organism>
    <name type="scientific">Chrysocyon brachyurus</name>
    <name type="common">Maned wolf</name>
    <dbReference type="NCBI Taxonomy" id="68728"/>
    <lineage>
        <taxon>Eukaryota</taxon>
        <taxon>Metazoa</taxon>
        <taxon>Chordata</taxon>
        <taxon>Craniata</taxon>
        <taxon>Vertebrata</taxon>
        <taxon>Euteleostomi</taxon>
        <taxon>Mammalia</taxon>
        <taxon>Eutheria</taxon>
        <taxon>Laurasiatheria</taxon>
        <taxon>Carnivora</taxon>
        <taxon>Caniformia</taxon>
        <taxon>Canidae</taxon>
        <taxon>Chrysocyon</taxon>
    </lineage>
</organism>
<protein>
    <recommendedName>
        <fullName>Hemoglobin subunit alpha</fullName>
    </recommendedName>
    <alternativeName>
        <fullName>Alpha-globin</fullName>
    </alternativeName>
    <alternativeName>
        <fullName>Hemoglobin alpha chain</fullName>
    </alternativeName>
    <component>
        <recommendedName>
            <fullName evidence="2">Hemopressin</fullName>
        </recommendedName>
    </component>
</protein>
<sequence length="141" mass="15247">VLSPADKTNIKSTWDKIGGHAGDYGGEALDRTFQSFPTTKTYFPHFDLSPGSAQVKAHGKKVADALTTAVAHLDDLPGALSALSDLHAYKLRVDPVNFKLLSHCLLVTLACHHPTEFTPAVHASLDKFFTAVSTVLTSKYR</sequence>
<accession>P60523</accession>
<reference key="1">
    <citation type="journal article" date="2003" name="Protein Pept. Lett.">
        <title>Crystal structure of hemoglobin from the maned wolf (Chrysocyon brachyurus) using synchrotron radiation.</title>
        <authorList>
            <person name="Fadel V."/>
            <person name="Canduri F."/>
            <person name="Olivieri J.R."/>
            <person name="Smarra A.L."/>
            <person name="Colombo M.F."/>
            <person name="Bonilla-Rodriguez G.O."/>
            <person name="de Azevedo W.F. Jr."/>
        </authorList>
    </citation>
    <scope>X-RAY CRYSTALLOGRAPHY (1.8 ANGSTROMS)</scope>
</reference>
<evidence type="ECO:0000250" key="1">
    <source>
        <dbReference type="UniProtKB" id="P01942"/>
    </source>
</evidence>
<evidence type="ECO:0000250" key="2">
    <source>
        <dbReference type="UniProtKB" id="P01946"/>
    </source>
</evidence>
<evidence type="ECO:0000250" key="3">
    <source>
        <dbReference type="UniProtKB" id="P69905"/>
    </source>
</evidence>
<evidence type="ECO:0000255" key="4">
    <source>
        <dbReference type="PROSITE-ProRule" id="PRU00238"/>
    </source>
</evidence>
<evidence type="ECO:0007829" key="5">
    <source>
        <dbReference type="PDB" id="1FHJ"/>
    </source>
</evidence>
<gene>
    <name type="primary">HBA</name>
</gene>